<accession>Q1J4Q7</accession>
<organism>
    <name type="scientific">Streptococcus pyogenes serotype M4 (strain MGAS10750)</name>
    <dbReference type="NCBI Taxonomy" id="370554"/>
    <lineage>
        <taxon>Bacteria</taxon>
        <taxon>Bacillati</taxon>
        <taxon>Bacillota</taxon>
        <taxon>Bacilli</taxon>
        <taxon>Lactobacillales</taxon>
        <taxon>Streptococcaceae</taxon>
        <taxon>Streptococcus</taxon>
    </lineage>
</organism>
<gene>
    <name evidence="1" type="primary">lacG</name>
    <name type="ordered locus">MGAS10750_Spy1729</name>
</gene>
<proteinExistence type="inferred from homology"/>
<name>LACG_STRPF</name>
<keyword id="KW-0326">Glycosidase</keyword>
<keyword id="KW-0378">Hydrolase</keyword>
<sequence>MTKTLPKDFIFGGATAAYQAEGATHTDGKGPVAWDKYLEDNYWYTAEPASDFYNRYPVDLKLSEEFGVNGIRISIAWSRIFPTGKGDVNPKGVEYYHNLFAECHKRHVEPFVTLHHFDTPEALHSDGDFLNRENIEHFVNYAEFCFKEFSEVNYWTTFNEIGPIGDGQYLVGKFPPGIQYDLAKVFQSHHNMMVSHARAVKLFKDGGYSGEIGVVHALPTKYPFDANNPDDVRAAELEDIIHNKFILDATYLGKYSDKTMEGVNHILEVNGGELDLREEDFVALDAAKDLNDFLGINYYMSDWMQAFDGETEIIHNGKGEKGSSKYQIKGVGRRKAPVDVPKTDWDWIIFPQGLYDQIMRVKADYPNYKKIYITENGLGYKDEFVDNTVYDDGRIDYVKKHLEVISDAISDGANVKGYFMWSLMDVFSWSNGYEKLYGLFYVDFETQERYPKKSAYWYKKVAETQVIE</sequence>
<evidence type="ECO:0000255" key="1">
    <source>
        <dbReference type="HAMAP-Rule" id="MF_01574"/>
    </source>
</evidence>
<evidence type="ECO:0000305" key="2"/>
<dbReference type="EC" id="3.2.1.85" evidence="1"/>
<dbReference type="EMBL" id="CP000262">
    <property type="protein sequence ID" value="ABF38679.1"/>
    <property type="status" value="ALT_INIT"/>
    <property type="molecule type" value="Genomic_DNA"/>
</dbReference>
<dbReference type="SMR" id="Q1J4Q7"/>
<dbReference type="CAZy" id="GH1">
    <property type="family name" value="Glycoside Hydrolase Family 1"/>
</dbReference>
<dbReference type="KEGG" id="spi:MGAS10750_Spy1729"/>
<dbReference type="HOGENOM" id="CLU_001859_1_3_9"/>
<dbReference type="UniPathway" id="UPA00542">
    <property type="reaction ID" value="UER00605"/>
</dbReference>
<dbReference type="Proteomes" id="UP000002434">
    <property type="component" value="Chromosome"/>
</dbReference>
<dbReference type="GO" id="GO:0005829">
    <property type="term" value="C:cytosol"/>
    <property type="evidence" value="ECO:0007669"/>
    <property type="project" value="TreeGrafter"/>
</dbReference>
<dbReference type="GO" id="GO:0033920">
    <property type="term" value="F:6-phospho-beta-galactosidase activity"/>
    <property type="evidence" value="ECO:0007669"/>
    <property type="project" value="UniProtKB-UniRule"/>
</dbReference>
<dbReference type="GO" id="GO:0008422">
    <property type="term" value="F:beta-glucosidase activity"/>
    <property type="evidence" value="ECO:0007669"/>
    <property type="project" value="TreeGrafter"/>
</dbReference>
<dbReference type="GO" id="GO:0019512">
    <property type="term" value="P:lactose catabolic process via tagatose-6-phosphate"/>
    <property type="evidence" value="ECO:0007669"/>
    <property type="project" value="InterPro"/>
</dbReference>
<dbReference type="FunFam" id="3.20.20.80:FF:000004">
    <property type="entry name" value="Beta-glucosidase 6-phospho-beta-glucosidase"/>
    <property type="match status" value="1"/>
</dbReference>
<dbReference type="Gene3D" id="3.20.20.80">
    <property type="entry name" value="Glycosidases"/>
    <property type="match status" value="1"/>
</dbReference>
<dbReference type="HAMAP" id="MF_01574">
    <property type="entry name" value="LacG"/>
    <property type="match status" value="1"/>
</dbReference>
<dbReference type="InterPro" id="IPR005928">
    <property type="entry name" value="6P-beta-galactosidase"/>
</dbReference>
<dbReference type="InterPro" id="IPR001360">
    <property type="entry name" value="Glyco_hydro_1"/>
</dbReference>
<dbReference type="InterPro" id="IPR018120">
    <property type="entry name" value="Glyco_hydro_1_AS"/>
</dbReference>
<dbReference type="InterPro" id="IPR033132">
    <property type="entry name" value="Glyco_hydro_1_N_CS"/>
</dbReference>
<dbReference type="InterPro" id="IPR017853">
    <property type="entry name" value="Glycoside_hydrolase_SF"/>
</dbReference>
<dbReference type="NCBIfam" id="TIGR01233">
    <property type="entry name" value="lacG"/>
    <property type="match status" value="1"/>
</dbReference>
<dbReference type="NCBIfam" id="NF010036">
    <property type="entry name" value="PRK13511.1"/>
    <property type="match status" value="1"/>
</dbReference>
<dbReference type="PANTHER" id="PTHR10353">
    <property type="entry name" value="GLYCOSYL HYDROLASE"/>
    <property type="match status" value="1"/>
</dbReference>
<dbReference type="PANTHER" id="PTHR10353:SF36">
    <property type="entry name" value="LP05116P"/>
    <property type="match status" value="1"/>
</dbReference>
<dbReference type="Pfam" id="PF00232">
    <property type="entry name" value="Glyco_hydro_1"/>
    <property type="match status" value="1"/>
</dbReference>
<dbReference type="PRINTS" id="PR00131">
    <property type="entry name" value="GLHYDRLASE1"/>
</dbReference>
<dbReference type="SUPFAM" id="SSF51445">
    <property type="entry name" value="(Trans)glycosidases"/>
    <property type="match status" value="1"/>
</dbReference>
<dbReference type="PROSITE" id="PS00572">
    <property type="entry name" value="GLYCOSYL_HYDROL_F1_1"/>
    <property type="match status" value="1"/>
</dbReference>
<dbReference type="PROSITE" id="PS00653">
    <property type="entry name" value="GLYCOSYL_HYDROL_F1_2"/>
    <property type="match status" value="1"/>
</dbReference>
<feature type="chain" id="PRO_0000260741" description="6-phospho-beta-galactosidase">
    <location>
        <begin position="1"/>
        <end position="468"/>
    </location>
</feature>
<feature type="active site" description="Proton donor" evidence="1">
    <location>
        <position position="160"/>
    </location>
</feature>
<feature type="active site" description="Nucleophile" evidence="1">
    <location>
        <position position="375"/>
    </location>
</feature>
<feature type="binding site" evidence="1">
    <location>
        <position position="19"/>
    </location>
    <ligand>
        <name>D-galactose 6-phosphate</name>
        <dbReference type="ChEBI" id="CHEBI:91004"/>
    </ligand>
</feature>
<feature type="binding site" evidence="1">
    <location>
        <position position="116"/>
    </location>
    <ligand>
        <name>D-galactose 6-phosphate</name>
        <dbReference type="ChEBI" id="CHEBI:91004"/>
    </ligand>
</feature>
<feature type="binding site" evidence="1">
    <location>
        <position position="159"/>
    </location>
    <ligand>
        <name>D-galactose 6-phosphate</name>
        <dbReference type="ChEBI" id="CHEBI:91004"/>
    </ligand>
</feature>
<feature type="binding site" evidence="1">
    <location>
        <position position="160"/>
    </location>
    <ligand>
        <name>D-galactose 6-phosphate</name>
        <dbReference type="ChEBI" id="CHEBI:91004"/>
    </ligand>
</feature>
<feature type="binding site" evidence="1">
    <location>
        <position position="297"/>
    </location>
    <ligand>
        <name>D-galactose 6-phosphate</name>
        <dbReference type="ChEBI" id="CHEBI:91004"/>
    </ligand>
</feature>
<feature type="binding site" evidence="1">
    <location>
        <position position="428"/>
    </location>
    <ligand>
        <name>D-galactose 6-phosphate</name>
        <dbReference type="ChEBI" id="CHEBI:91004"/>
    </ligand>
</feature>
<feature type="binding site" evidence="1">
    <location>
        <position position="429"/>
    </location>
    <ligand>
        <name>D-galactose 6-phosphate</name>
        <dbReference type="ChEBI" id="CHEBI:91004"/>
    </ligand>
</feature>
<feature type="binding site" evidence="1">
    <location>
        <position position="435"/>
    </location>
    <ligand>
        <name>D-galactose 6-phosphate</name>
        <dbReference type="ChEBI" id="CHEBI:91004"/>
    </ligand>
</feature>
<feature type="binding site" evidence="1">
    <location>
        <position position="437"/>
    </location>
    <ligand>
        <name>D-galactose 6-phosphate</name>
        <dbReference type="ChEBI" id="CHEBI:91004"/>
    </ligand>
</feature>
<reference key="1">
    <citation type="journal article" date="2006" name="Proc. Natl. Acad. Sci. U.S.A.">
        <title>Molecular genetic anatomy of inter- and intraserotype variation in the human bacterial pathogen group A Streptococcus.</title>
        <authorList>
            <person name="Beres S.B."/>
            <person name="Richter E.W."/>
            <person name="Nagiec M.J."/>
            <person name="Sumby P."/>
            <person name="Porcella S.F."/>
            <person name="DeLeo F.R."/>
            <person name="Musser J.M."/>
        </authorList>
    </citation>
    <scope>NUCLEOTIDE SEQUENCE [LARGE SCALE GENOMIC DNA]</scope>
    <source>
        <strain>MGAS10750</strain>
    </source>
</reference>
<comment type="catalytic activity">
    <reaction evidence="1">
        <text>a 6-phospho-beta-D-galactoside + H2O = D-galactose 6-phosphate + an alcohol</text>
        <dbReference type="Rhea" id="RHEA:24568"/>
        <dbReference type="ChEBI" id="CHEBI:15377"/>
        <dbReference type="ChEBI" id="CHEBI:30879"/>
        <dbReference type="ChEBI" id="CHEBI:58534"/>
        <dbReference type="ChEBI" id="CHEBI:91004"/>
        <dbReference type="EC" id="3.2.1.85"/>
    </reaction>
</comment>
<comment type="pathway">
    <text evidence="1">Carbohydrate metabolism; lactose degradation; D-galactose 6-phosphate and beta-D-glucose from lactose 6-phosphate: step 1/1.</text>
</comment>
<comment type="similarity">
    <text evidence="1">Belongs to the glycosyl hydrolase 1 family.</text>
</comment>
<comment type="sequence caution" evidence="2">
    <conflict type="erroneous initiation">
        <sequence resource="EMBL-CDS" id="ABF38679"/>
    </conflict>
</comment>
<protein>
    <recommendedName>
        <fullName evidence="1">6-phospho-beta-galactosidase</fullName>
        <ecNumber evidence="1">3.2.1.85</ecNumber>
    </recommendedName>
    <alternativeName>
        <fullName evidence="1">Beta-D-phosphogalactoside galactohydrolase</fullName>
        <shortName evidence="1">PGALase</shortName>
    </alternativeName>
    <alternativeName>
        <fullName evidence="1">P-beta-Gal</fullName>
        <shortName evidence="1">PBG</shortName>
    </alternativeName>
</protein>